<feature type="chain" id="PRO_1000199548" description="Threonine--tRNA ligase">
    <location>
        <begin position="1"/>
        <end position="642"/>
    </location>
</feature>
<feature type="domain" description="TGS" evidence="2">
    <location>
        <begin position="1"/>
        <end position="61"/>
    </location>
</feature>
<feature type="region of interest" description="Catalytic" evidence="1">
    <location>
        <begin position="243"/>
        <end position="534"/>
    </location>
</feature>
<feature type="binding site" evidence="1">
    <location>
        <position position="334"/>
    </location>
    <ligand>
        <name>Zn(2+)</name>
        <dbReference type="ChEBI" id="CHEBI:29105"/>
    </ligand>
</feature>
<feature type="binding site" evidence="1">
    <location>
        <position position="385"/>
    </location>
    <ligand>
        <name>Zn(2+)</name>
        <dbReference type="ChEBI" id="CHEBI:29105"/>
    </ligand>
</feature>
<feature type="binding site" evidence="1">
    <location>
        <position position="511"/>
    </location>
    <ligand>
        <name>Zn(2+)</name>
        <dbReference type="ChEBI" id="CHEBI:29105"/>
    </ligand>
</feature>
<feature type="modified residue" description="N6-acetyllysine" evidence="1">
    <location>
        <position position="286"/>
    </location>
</feature>
<organism>
    <name type="scientific">Escherichia coli O45:K1 (strain S88 / ExPEC)</name>
    <dbReference type="NCBI Taxonomy" id="585035"/>
    <lineage>
        <taxon>Bacteria</taxon>
        <taxon>Pseudomonadati</taxon>
        <taxon>Pseudomonadota</taxon>
        <taxon>Gammaproteobacteria</taxon>
        <taxon>Enterobacterales</taxon>
        <taxon>Enterobacteriaceae</taxon>
        <taxon>Escherichia</taxon>
    </lineage>
</organism>
<proteinExistence type="inferred from homology"/>
<evidence type="ECO:0000255" key="1">
    <source>
        <dbReference type="HAMAP-Rule" id="MF_00184"/>
    </source>
</evidence>
<evidence type="ECO:0000255" key="2">
    <source>
        <dbReference type="PROSITE-ProRule" id="PRU01228"/>
    </source>
</evidence>
<sequence length="642" mass="74014">MPVITLPDGSQRHYDHAVSPMDVALDIGPGLAKACIAGRVNGELVDACDLIENDAQLSIITAKDEEGLEIIRHSCAHLLGHAIKQLWPHTKMAIGPVIDNGFYYDVDLDRTLTQEDVEALEKRMHELAEKNYDVIKKKVSWHEARETFANRGESYKVSILDENIAHDDKPGLYFHEEYVDMCRGPHVPNMRFCHHFKLMKTAGAYWRGDSNNKMLQRIYGTAWADKKALNAYLQRLEEAAKRDHRKIGKQLDLYHMQEEAPGMVFWHNDGWTIFRELEVFVRSKLKEYQYQEVKGPFMMDRVLWEKTGHWDNYKDAMFTTSSENREYCIKPMNCPGHVQIFNQGLKSYRDLPLRMAEFGSCHRNEPSGSLHGLMRVRGFTQDDAHIFCTEEQIRDEVNGCIRLVYDMYSTFGFEKIVVKLSTRPEKRIGSDEMWDRAEADLAVALEENNIPFEYQLGEGAFYGPKIEFTLYDCLDRAWQCGTVQLDFSLPSRLSASYVGEDNERKVPVMIHRAILGSMERFIGILTEEFAGFFPTWLAPVQVVIMNITDSQSEYVNELTQKLSNAGIRVKADLRNEKIGFKIREHTLRRVPYMLVCGDKEVESGKVAVRTRRGKDLGSMDVNEVIEKLQQEIRSRSLKQLEE</sequence>
<gene>
    <name evidence="1" type="primary">thrS</name>
    <name type="ordered locus">ECS88_1769</name>
</gene>
<dbReference type="EC" id="6.1.1.3" evidence="1"/>
<dbReference type="EMBL" id="CU928161">
    <property type="protein sequence ID" value="CAR03078.1"/>
    <property type="molecule type" value="Genomic_DNA"/>
</dbReference>
<dbReference type="RefSeq" id="WP_001144202.1">
    <property type="nucleotide sequence ID" value="NC_011742.1"/>
</dbReference>
<dbReference type="SMR" id="B7MAS9"/>
<dbReference type="GeneID" id="93775932"/>
<dbReference type="KEGG" id="ecz:ECS88_1769"/>
<dbReference type="HOGENOM" id="CLU_008554_0_1_6"/>
<dbReference type="Proteomes" id="UP000000747">
    <property type="component" value="Chromosome"/>
</dbReference>
<dbReference type="GO" id="GO:0005829">
    <property type="term" value="C:cytosol"/>
    <property type="evidence" value="ECO:0007669"/>
    <property type="project" value="TreeGrafter"/>
</dbReference>
<dbReference type="GO" id="GO:0005524">
    <property type="term" value="F:ATP binding"/>
    <property type="evidence" value="ECO:0007669"/>
    <property type="project" value="UniProtKB-UniRule"/>
</dbReference>
<dbReference type="GO" id="GO:0046872">
    <property type="term" value="F:metal ion binding"/>
    <property type="evidence" value="ECO:0007669"/>
    <property type="project" value="UniProtKB-KW"/>
</dbReference>
<dbReference type="GO" id="GO:0004829">
    <property type="term" value="F:threonine-tRNA ligase activity"/>
    <property type="evidence" value="ECO:0007669"/>
    <property type="project" value="UniProtKB-UniRule"/>
</dbReference>
<dbReference type="GO" id="GO:0000049">
    <property type="term" value="F:tRNA binding"/>
    <property type="evidence" value="ECO:0007669"/>
    <property type="project" value="UniProtKB-KW"/>
</dbReference>
<dbReference type="GO" id="GO:0006435">
    <property type="term" value="P:threonyl-tRNA aminoacylation"/>
    <property type="evidence" value="ECO:0007669"/>
    <property type="project" value="UniProtKB-UniRule"/>
</dbReference>
<dbReference type="CDD" id="cd01667">
    <property type="entry name" value="TGS_ThrRS"/>
    <property type="match status" value="1"/>
</dbReference>
<dbReference type="CDD" id="cd00860">
    <property type="entry name" value="ThrRS_anticodon"/>
    <property type="match status" value="1"/>
</dbReference>
<dbReference type="CDD" id="cd00771">
    <property type="entry name" value="ThrRS_core"/>
    <property type="match status" value="1"/>
</dbReference>
<dbReference type="FunFam" id="3.10.20.30:FF:000005">
    <property type="entry name" value="Threonine--tRNA ligase"/>
    <property type="match status" value="1"/>
</dbReference>
<dbReference type="FunFam" id="3.30.54.20:FF:000002">
    <property type="entry name" value="Threonine--tRNA ligase"/>
    <property type="match status" value="1"/>
</dbReference>
<dbReference type="FunFam" id="3.30.930.10:FF:000002">
    <property type="entry name" value="Threonine--tRNA ligase"/>
    <property type="match status" value="1"/>
</dbReference>
<dbReference type="FunFam" id="3.40.50.800:FF:000001">
    <property type="entry name" value="Threonine--tRNA ligase"/>
    <property type="match status" value="1"/>
</dbReference>
<dbReference type="FunFam" id="3.30.980.10:FF:000005">
    <property type="entry name" value="Threonyl-tRNA synthetase, mitochondrial"/>
    <property type="match status" value="1"/>
</dbReference>
<dbReference type="Gene3D" id="3.10.20.30">
    <property type="match status" value="1"/>
</dbReference>
<dbReference type="Gene3D" id="3.30.54.20">
    <property type="match status" value="1"/>
</dbReference>
<dbReference type="Gene3D" id="3.40.50.800">
    <property type="entry name" value="Anticodon-binding domain"/>
    <property type="match status" value="1"/>
</dbReference>
<dbReference type="Gene3D" id="3.30.930.10">
    <property type="entry name" value="Bira Bifunctional Protein, Domain 2"/>
    <property type="match status" value="1"/>
</dbReference>
<dbReference type="Gene3D" id="3.30.980.10">
    <property type="entry name" value="Threonyl-trna Synthetase, Chain A, domain 2"/>
    <property type="match status" value="1"/>
</dbReference>
<dbReference type="HAMAP" id="MF_00184">
    <property type="entry name" value="Thr_tRNA_synth"/>
    <property type="match status" value="1"/>
</dbReference>
<dbReference type="InterPro" id="IPR002314">
    <property type="entry name" value="aa-tRNA-synt_IIb"/>
</dbReference>
<dbReference type="InterPro" id="IPR006195">
    <property type="entry name" value="aa-tRNA-synth_II"/>
</dbReference>
<dbReference type="InterPro" id="IPR045864">
    <property type="entry name" value="aa-tRNA-synth_II/BPL/LPL"/>
</dbReference>
<dbReference type="InterPro" id="IPR004154">
    <property type="entry name" value="Anticodon-bd"/>
</dbReference>
<dbReference type="InterPro" id="IPR036621">
    <property type="entry name" value="Anticodon-bd_dom_sf"/>
</dbReference>
<dbReference type="InterPro" id="IPR012675">
    <property type="entry name" value="Beta-grasp_dom_sf"/>
</dbReference>
<dbReference type="InterPro" id="IPR004095">
    <property type="entry name" value="TGS"/>
</dbReference>
<dbReference type="InterPro" id="IPR012676">
    <property type="entry name" value="TGS-like"/>
</dbReference>
<dbReference type="InterPro" id="IPR002320">
    <property type="entry name" value="Thr-tRNA-ligase_IIa"/>
</dbReference>
<dbReference type="InterPro" id="IPR018163">
    <property type="entry name" value="Thr/Ala-tRNA-synth_IIc_edit"/>
</dbReference>
<dbReference type="InterPro" id="IPR047246">
    <property type="entry name" value="ThrRS_anticodon"/>
</dbReference>
<dbReference type="InterPro" id="IPR033728">
    <property type="entry name" value="ThrRS_core"/>
</dbReference>
<dbReference type="InterPro" id="IPR012947">
    <property type="entry name" value="tRNA_SAD"/>
</dbReference>
<dbReference type="NCBIfam" id="TIGR00418">
    <property type="entry name" value="thrS"/>
    <property type="match status" value="1"/>
</dbReference>
<dbReference type="PANTHER" id="PTHR11451:SF44">
    <property type="entry name" value="THREONINE--TRNA LIGASE, CHLOROPLASTIC_MITOCHONDRIAL 2"/>
    <property type="match status" value="1"/>
</dbReference>
<dbReference type="PANTHER" id="PTHR11451">
    <property type="entry name" value="THREONINE-TRNA LIGASE"/>
    <property type="match status" value="1"/>
</dbReference>
<dbReference type="Pfam" id="PF03129">
    <property type="entry name" value="HGTP_anticodon"/>
    <property type="match status" value="1"/>
</dbReference>
<dbReference type="Pfam" id="PF02824">
    <property type="entry name" value="TGS"/>
    <property type="match status" value="1"/>
</dbReference>
<dbReference type="Pfam" id="PF00587">
    <property type="entry name" value="tRNA-synt_2b"/>
    <property type="match status" value="1"/>
</dbReference>
<dbReference type="Pfam" id="PF07973">
    <property type="entry name" value="tRNA_SAD"/>
    <property type="match status" value="1"/>
</dbReference>
<dbReference type="PRINTS" id="PR01047">
    <property type="entry name" value="TRNASYNTHTHR"/>
</dbReference>
<dbReference type="SMART" id="SM00863">
    <property type="entry name" value="tRNA_SAD"/>
    <property type="match status" value="1"/>
</dbReference>
<dbReference type="SUPFAM" id="SSF52954">
    <property type="entry name" value="Class II aaRS ABD-related"/>
    <property type="match status" value="1"/>
</dbReference>
<dbReference type="SUPFAM" id="SSF55681">
    <property type="entry name" value="Class II aaRS and biotin synthetases"/>
    <property type="match status" value="1"/>
</dbReference>
<dbReference type="SUPFAM" id="SSF81271">
    <property type="entry name" value="TGS-like"/>
    <property type="match status" value="1"/>
</dbReference>
<dbReference type="SUPFAM" id="SSF55186">
    <property type="entry name" value="ThrRS/AlaRS common domain"/>
    <property type="match status" value="1"/>
</dbReference>
<dbReference type="PROSITE" id="PS50862">
    <property type="entry name" value="AA_TRNA_LIGASE_II"/>
    <property type="match status" value="1"/>
</dbReference>
<dbReference type="PROSITE" id="PS51880">
    <property type="entry name" value="TGS"/>
    <property type="match status" value="1"/>
</dbReference>
<comment type="function">
    <text evidence="1">Catalyzes the attachment of threonine to tRNA(Thr) in a two-step reaction: L-threonine is first activated by ATP to form Thr-AMP and then transferred to the acceptor end of tRNA(Thr). Also edits incorrectly charged L-seryl-tRNA(Thr).</text>
</comment>
<comment type="catalytic activity">
    <reaction evidence="1">
        <text>tRNA(Thr) + L-threonine + ATP = L-threonyl-tRNA(Thr) + AMP + diphosphate + H(+)</text>
        <dbReference type="Rhea" id="RHEA:24624"/>
        <dbReference type="Rhea" id="RHEA-COMP:9670"/>
        <dbReference type="Rhea" id="RHEA-COMP:9704"/>
        <dbReference type="ChEBI" id="CHEBI:15378"/>
        <dbReference type="ChEBI" id="CHEBI:30616"/>
        <dbReference type="ChEBI" id="CHEBI:33019"/>
        <dbReference type="ChEBI" id="CHEBI:57926"/>
        <dbReference type="ChEBI" id="CHEBI:78442"/>
        <dbReference type="ChEBI" id="CHEBI:78534"/>
        <dbReference type="ChEBI" id="CHEBI:456215"/>
        <dbReference type="EC" id="6.1.1.3"/>
    </reaction>
</comment>
<comment type="cofactor">
    <cofactor evidence="1">
        <name>Zn(2+)</name>
        <dbReference type="ChEBI" id="CHEBI:29105"/>
    </cofactor>
    <text evidence="1">Binds 1 zinc ion per subunit.</text>
</comment>
<comment type="subunit">
    <text evidence="1">Homodimer.</text>
</comment>
<comment type="subcellular location">
    <subcellularLocation>
        <location evidence="1">Cytoplasm</location>
    </subcellularLocation>
</comment>
<comment type="similarity">
    <text evidence="1">Belongs to the class-II aminoacyl-tRNA synthetase family.</text>
</comment>
<protein>
    <recommendedName>
        <fullName evidence="1">Threonine--tRNA ligase</fullName>
        <ecNumber evidence="1">6.1.1.3</ecNumber>
    </recommendedName>
    <alternativeName>
        <fullName evidence="1">Threonyl-tRNA synthetase</fullName>
        <shortName evidence="1">ThrRS</shortName>
    </alternativeName>
</protein>
<accession>B7MAS9</accession>
<name>SYT_ECO45</name>
<keyword id="KW-0007">Acetylation</keyword>
<keyword id="KW-0030">Aminoacyl-tRNA synthetase</keyword>
<keyword id="KW-0067">ATP-binding</keyword>
<keyword id="KW-0963">Cytoplasm</keyword>
<keyword id="KW-0436">Ligase</keyword>
<keyword id="KW-0479">Metal-binding</keyword>
<keyword id="KW-0547">Nucleotide-binding</keyword>
<keyword id="KW-0648">Protein biosynthesis</keyword>
<keyword id="KW-1185">Reference proteome</keyword>
<keyword id="KW-0694">RNA-binding</keyword>
<keyword id="KW-0820">tRNA-binding</keyword>
<keyword id="KW-0862">Zinc</keyword>
<reference key="1">
    <citation type="journal article" date="2009" name="PLoS Genet.">
        <title>Organised genome dynamics in the Escherichia coli species results in highly diverse adaptive paths.</title>
        <authorList>
            <person name="Touchon M."/>
            <person name="Hoede C."/>
            <person name="Tenaillon O."/>
            <person name="Barbe V."/>
            <person name="Baeriswyl S."/>
            <person name="Bidet P."/>
            <person name="Bingen E."/>
            <person name="Bonacorsi S."/>
            <person name="Bouchier C."/>
            <person name="Bouvet O."/>
            <person name="Calteau A."/>
            <person name="Chiapello H."/>
            <person name="Clermont O."/>
            <person name="Cruveiller S."/>
            <person name="Danchin A."/>
            <person name="Diard M."/>
            <person name="Dossat C."/>
            <person name="Karoui M.E."/>
            <person name="Frapy E."/>
            <person name="Garry L."/>
            <person name="Ghigo J.M."/>
            <person name="Gilles A.M."/>
            <person name="Johnson J."/>
            <person name="Le Bouguenec C."/>
            <person name="Lescat M."/>
            <person name="Mangenot S."/>
            <person name="Martinez-Jehanne V."/>
            <person name="Matic I."/>
            <person name="Nassif X."/>
            <person name="Oztas S."/>
            <person name="Petit M.A."/>
            <person name="Pichon C."/>
            <person name="Rouy Z."/>
            <person name="Ruf C.S."/>
            <person name="Schneider D."/>
            <person name="Tourret J."/>
            <person name="Vacherie B."/>
            <person name="Vallenet D."/>
            <person name="Medigue C."/>
            <person name="Rocha E.P.C."/>
            <person name="Denamur E."/>
        </authorList>
    </citation>
    <scope>NUCLEOTIDE SEQUENCE [LARGE SCALE GENOMIC DNA]</scope>
    <source>
        <strain>S88 / ExPEC</strain>
    </source>
</reference>